<gene>
    <name evidence="1" type="primary">ZNF2</name>
</gene>
<feature type="chain" id="PRO_0000274051" description="Zinc finger protein 2">
    <location>
        <begin position="1"/>
        <end position="425"/>
    </location>
</feature>
<feature type="domain" description="KRAB" evidence="3">
    <location>
        <begin position="14"/>
        <end position="85"/>
    </location>
</feature>
<feature type="zinc finger region" description="C2H2-type 1" evidence="2">
    <location>
        <begin position="173"/>
        <end position="195"/>
    </location>
</feature>
<feature type="zinc finger region" description="C2H2-type 2" evidence="2">
    <location>
        <begin position="201"/>
        <end position="223"/>
    </location>
</feature>
<feature type="zinc finger region" description="C2H2-type 3" evidence="2">
    <location>
        <begin position="229"/>
        <end position="251"/>
    </location>
</feature>
<feature type="zinc finger region" description="C2H2-type 4" evidence="2">
    <location>
        <begin position="257"/>
        <end position="279"/>
    </location>
</feature>
<feature type="zinc finger region" description="C2H2-type 5" evidence="2">
    <location>
        <begin position="285"/>
        <end position="307"/>
    </location>
</feature>
<feature type="zinc finger region" description="C2H2-type 6" evidence="2">
    <location>
        <begin position="313"/>
        <end position="335"/>
    </location>
</feature>
<feature type="zinc finger region" description="C2H2-type 7" evidence="2">
    <location>
        <begin position="341"/>
        <end position="363"/>
    </location>
</feature>
<feature type="zinc finger region" description="C2H2-type 8" evidence="2">
    <location>
        <begin position="369"/>
        <end position="391"/>
    </location>
</feature>
<feature type="zinc finger region" description="C2H2-type 9; degenerate" evidence="2">
    <location>
        <begin position="397"/>
        <end position="419"/>
    </location>
</feature>
<feature type="region of interest" description="Disordered" evidence="4">
    <location>
        <begin position="125"/>
        <end position="160"/>
    </location>
</feature>
<feature type="compositionally biased region" description="Basic and acidic residues" evidence="4">
    <location>
        <begin position="125"/>
        <end position="136"/>
    </location>
</feature>
<feature type="compositionally biased region" description="Basic and acidic residues" evidence="4">
    <location>
        <begin position="144"/>
        <end position="156"/>
    </location>
</feature>
<protein>
    <recommendedName>
        <fullName evidence="1">Zinc finger protein 2</fullName>
    </recommendedName>
</protein>
<name>ZNF2_PONAB</name>
<sequence length="425" mass="48409">MAAVSPTTRCQESVTFEDVAVVFTDEEWSHLVPTQRDLYKEVMLENYNSIVSLGLPVPQPDVIFQLKRGDKPWMVDLHGSEEREWPESVSLDWETKPEIHDASNEKSEGSLRECLGRQSPLCPKFEVHTPDGRMGTEKQSSSGETHKKSLSQDKGLRRGSALPREILTKERHQECSDCGKTFFDHSSLTRHQRTHTGEKPYDCHECGKAFSHRSSLSRHLMSHTGESPYGCSVCAKAFFDRSSLTVHQRIHTGEKPFQCNECGKAFFDRSSLTRHQRIHTGESPYECHQCGKAFSQKSILTRHQLIHTGRKPYECNECGKAFYGVSSLNRHQKAHAGDPRYQCNECGKAFFDRSSLTQHQKIHTGDKPYECSECGKAFSQRCRLTRHQRVHTGEKPFECSVCGKVFSSKSSVIQHQRRYAKQGID</sequence>
<comment type="function">
    <text>May be involved in transcriptional regulation.</text>
</comment>
<comment type="subcellular location">
    <subcellularLocation>
        <location evidence="5">Nucleus</location>
    </subcellularLocation>
</comment>
<comment type="similarity">
    <text evidence="5">Belongs to the krueppel C2H2-type zinc-finger protein family.</text>
</comment>
<reference key="1">
    <citation type="submission" date="2004-11" db="EMBL/GenBank/DDBJ databases">
        <authorList>
            <consortium name="The German cDNA consortium"/>
        </authorList>
    </citation>
    <scope>NUCLEOTIDE SEQUENCE [LARGE SCALE MRNA]</scope>
    <source>
        <tissue>Kidney</tissue>
    </source>
</reference>
<organism>
    <name type="scientific">Pongo abelii</name>
    <name type="common">Sumatran orangutan</name>
    <name type="synonym">Pongo pygmaeus abelii</name>
    <dbReference type="NCBI Taxonomy" id="9601"/>
    <lineage>
        <taxon>Eukaryota</taxon>
        <taxon>Metazoa</taxon>
        <taxon>Chordata</taxon>
        <taxon>Craniata</taxon>
        <taxon>Vertebrata</taxon>
        <taxon>Euteleostomi</taxon>
        <taxon>Mammalia</taxon>
        <taxon>Eutheria</taxon>
        <taxon>Euarchontoglires</taxon>
        <taxon>Primates</taxon>
        <taxon>Haplorrhini</taxon>
        <taxon>Catarrhini</taxon>
        <taxon>Hominidae</taxon>
        <taxon>Pongo</taxon>
    </lineage>
</organism>
<keyword id="KW-0238">DNA-binding</keyword>
<keyword id="KW-0479">Metal-binding</keyword>
<keyword id="KW-0539">Nucleus</keyword>
<keyword id="KW-1185">Reference proteome</keyword>
<keyword id="KW-0677">Repeat</keyword>
<keyword id="KW-0804">Transcription</keyword>
<keyword id="KW-0805">Transcription regulation</keyword>
<keyword id="KW-0862">Zinc</keyword>
<keyword id="KW-0863">Zinc-finger</keyword>
<evidence type="ECO:0000250" key="1">
    <source>
        <dbReference type="UniProtKB" id="Q9BSG1"/>
    </source>
</evidence>
<evidence type="ECO:0000255" key="2">
    <source>
        <dbReference type="PROSITE-ProRule" id="PRU00042"/>
    </source>
</evidence>
<evidence type="ECO:0000255" key="3">
    <source>
        <dbReference type="PROSITE-ProRule" id="PRU00119"/>
    </source>
</evidence>
<evidence type="ECO:0000256" key="4">
    <source>
        <dbReference type="SAM" id="MobiDB-lite"/>
    </source>
</evidence>
<evidence type="ECO:0000305" key="5"/>
<proteinExistence type="evidence at transcript level"/>
<accession>Q5RBY9</accession>
<dbReference type="EMBL" id="CR858493">
    <property type="protein sequence ID" value="CAH90721.1"/>
    <property type="molecule type" value="mRNA"/>
</dbReference>
<dbReference type="RefSeq" id="NP_001125401.1">
    <property type="nucleotide sequence ID" value="NM_001131929.1"/>
</dbReference>
<dbReference type="SMR" id="Q5RBY9"/>
<dbReference type="STRING" id="9601.ENSPPYP00000013439"/>
<dbReference type="GeneID" id="100172306"/>
<dbReference type="KEGG" id="pon:100172306"/>
<dbReference type="CTD" id="7549"/>
<dbReference type="eggNOG" id="KOG1721">
    <property type="taxonomic scope" value="Eukaryota"/>
</dbReference>
<dbReference type="InParanoid" id="Q5RBY9"/>
<dbReference type="OrthoDB" id="6077919at2759"/>
<dbReference type="Proteomes" id="UP000001595">
    <property type="component" value="Unplaced"/>
</dbReference>
<dbReference type="GO" id="GO:0005654">
    <property type="term" value="C:nucleoplasm"/>
    <property type="evidence" value="ECO:0007669"/>
    <property type="project" value="TreeGrafter"/>
</dbReference>
<dbReference type="GO" id="GO:0001227">
    <property type="term" value="F:DNA-binding transcription repressor activity, RNA polymerase II-specific"/>
    <property type="evidence" value="ECO:0007669"/>
    <property type="project" value="TreeGrafter"/>
</dbReference>
<dbReference type="GO" id="GO:0000978">
    <property type="term" value="F:RNA polymerase II cis-regulatory region sequence-specific DNA binding"/>
    <property type="evidence" value="ECO:0007669"/>
    <property type="project" value="TreeGrafter"/>
</dbReference>
<dbReference type="GO" id="GO:0008270">
    <property type="term" value="F:zinc ion binding"/>
    <property type="evidence" value="ECO:0007669"/>
    <property type="project" value="UniProtKB-KW"/>
</dbReference>
<dbReference type="GO" id="GO:0001817">
    <property type="term" value="P:regulation of cytokine production"/>
    <property type="evidence" value="ECO:0007669"/>
    <property type="project" value="TreeGrafter"/>
</dbReference>
<dbReference type="GO" id="GO:0002682">
    <property type="term" value="P:regulation of immune system process"/>
    <property type="evidence" value="ECO:0007669"/>
    <property type="project" value="TreeGrafter"/>
</dbReference>
<dbReference type="CDD" id="cd07765">
    <property type="entry name" value="KRAB_A-box"/>
    <property type="match status" value="1"/>
</dbReference>
<dbReference type="FunFam" id="3.30.160.60:FF:001677">
    <property type="entry name" value="Zinc finger protein 2"/>
    <property type="match status" value="1"/>
</dbReference>
<dbReference type="FunFam" id="3.30.160.60:FF:000380">
    <property type="entry name" value="zinc finger protein 2 isoform X2"/>
    <property type="match status" value="1"/>
</dbReference>
<dbReference type="FunFam" id="3.30.160.60:FF:000794">
    <property type="entry name" value="zinc finger protein 2 isoform X2"/>
    <property type="match status" value="2"/>
</dbReference>
<dbReference type="FunFam" id="3.30.160.60:FF:000947">
    <property type="entry name" value="zinc finger protein 2 isoform X2"/>
    <property type="match status" value="1"/>
</dbReference>
<dbReference type="FunFam" id="3.30.160.60:FF:002343">
    <property type="entry name" value="Zinc finger protein 33A"/>
    <property type="match status" value="1"/>
</dbReference>
<dbReference type="FunFam" id="3.30.160.60:FF:001498">
    <property type="entry name" value="Zinc finger protein 404"/>
    <property type="match status" value="1"/>
</dbReference>
<dbReference type="FunFam" id="3.30.160.60:FF:000899">
    <property type="entry name" value="zinc finger protein 558 isoform X2"/>
    <property type="match status" value="1"/>
</dbReference>
<dbReference type="FunFam" id="3.30.160.60:FF:000737">
    <property type="entry name" value="Zinc finger protein 565"/>
    <property type="match status" value="1"/>
</dbReference>
<dbReference type="Gene3D" id="6.10.140.140">
    <property type="match status" value="1"/>
</dbReference>
<dbReference type="Gene3D" id="3.30.160.60">
    <property type="entry name" value="Classic Zinc Finger"/>
    <property type="match status" value="9"/>
</dbReference>
<dbReference type="InterPro" id="IPR001909">
    <property type="entry name" value="KRAB"/>
</dbReference>
<dbReference type="InterPro" id="IPR036051">
    <property type="entry name" value="KRAB_dom_sf"/>
</dbReference>
<dbReference type="InterPro" id="IPR036236">
    <property type="entry name" value="Znf_C2H2_sf"/>
</dbReference>
<dbReference type="InterPro" id="IPR013087">
    <property type="entry name" value="Znf_C2H2_type"/>
</dbReference>
<dbReference type="PANTHER" id="PTHR24399:SF75">
    <property type="entry name" value="ZFP14 ZINC FINGER PROTEIN-RELATED"/>
    <property type="match status" value="1"/>
</dbReference>
<dbReference type="PANTHER" id="PTHR24399">
    <property type="entry name" value="ZINC FINGER AND BTB DOMAIN-CONTAINING"/>
    <property type="match status" value="1"/>
</dbReference>
<dbReference type="Pfam" id="PF01352">
    <property type="entry name" value="KRAB"/>
    <property type="match status" value="1"/>
</dbReference>
<dbReference type="Pfam" id="PF00096">
    <property type="entry name" value="zf-C2H2"/>
    <property type="match status" value="9"/>
</dbReference>
<dbReference type="SMART" id="SM00349">
    <property type="entry name" value="KRAB"/>
    <property type="match status" value="1"/>
</dbReference>
<dbReference type="SMART" id="SM00355">
    <property type="entry name" value="ZnF_C2H2"/>
    <property type="match status" value="9"/>
</dbReference>
<dbReference type="SUPFAM" id="SSF57667">
    <property type="entry name" value="beta-beta-alpha zinc fingers"/>
    <property type="match status" value="5"/>
</dbReference>
<dbReference type="SUPFAM" id="SSF109640">
    <property type="entry name" value="KRAB domain (Kruppel-associated box)"/>
    <property type="match status" value="1"/>
</dbReference>
<dbReference type="PROSITE" id="PS50805">
    <property type="entry name" value="KRAB"/>
    <property type="match status" value="1"/>
</dbReference>
<dbReference type="PROSITE" id="PS00028">
    <property type="entry name" value="ZINC_FINGER_C2H2_1"/>
    <property type="match status" value="8"/>
</dbReference>
<dbReference type="PROSITE" id="PS50157">
    <property type="entry name" value="ZINC_FINGER_C2H2_2"/>
    <property type="match status" value="9"/>
</dbReference>